<feature type="chain" id="PRO_0000194859" description="COP9 signalosome complex subunit 5">
    <location>
        <begin position="1"/>
        <end position="440"/>
    </location>
</feature>
<feature type="domain" description="MPN" evidence="2">
    <location>
        <begin position="71"/>
        <end position="218"/>
    </location>
</feature>
<feature type="region of interest" description="Disordered" evidence="3">
    <location>
        <begin position="319"/>
        <end position="343"/>
    </location>
</feature>
<feature type="region of interest" description="Disordered" evidence="3">
    <location>
        <begin position="375"/>
        <end position="399"/>
    </location>
</feature>
<feature type="short sequence motif" description="JAMM motif" evidence="2">
    <location>
        <begin position="164"/>
        <end position="177"/>
    </location>
</feature>
<feature type="compositionally biased region" description="Polar residues" evidence="3">
    <location>
        <begin position="319"/>
        <end position="341"/>
    </location>
</feature>
<feature type="binding site" evidence="2">
    <location>
        <position position="164"/>
    </location>
    <ligand>
        <name>Zn(2+)</name>
        <dbReference type="ChEBI" id="CHEBI:29105"/>
        <note>catalytic</note>
    </ligand>
</feature>
<feature type="binding site" evidence="2">
    <location>
        <position position="166"/>
    </location>
    <ligand>
        <name>Zn(2+)</name>
        <dbReference type="ChEBI" id="CHEBI:29105"/>
        <note>catalytic</note>
    </ligand>
</feature>
<feature type="binding site" evidence="2">
    <location>
        <position position="177"/>
    </location>
    <ligand>
        <name>Zn(2+)</name>
        <dbReference type="ChEBI" id="CHEBI:29105"/>
        <note>catalytic</note>
    </ligand>
</feature>
<feature type="mutagenesis site" description="Abolishes deneddylation of CDC53." evidence="5">
    <original>H</original>
    <variation>A</variation>
    <location>
        <position position="164"/>
    </location>
</feature>
<feature type="mutagenesis site" description="Abolishes deneddylation of CDC53." evidence="5">
    <original>H</original>
    <variation>A</variation>
    <location>
        <position position="166"/>
    </location>
</feature>
<feature type="mutagenesis site" description="Abolishes deneddylation of CDC53." evidence="5">
    <original>D</original>
    <variation>A</variation>
    <location>
        <position position="177"/>
    </location>
</feature>
<proteinExistence type="evidence at protein level"/>
<comment type="function">
    <text evidence="1 5 6 7">Catalytic component of the COP9 signalosome (CSN) complex that acts as an regulator of the ubiquitin (Ubl) conjugation pathway by mediating the deneddylation of the cullin subunit of SCF-type E3 ubiquitin-protein ligase complexes (By similarity). The CSN complex is involved in the regulation of the mating pheromone response.</text>
</comment>
<comment type="cofactor">
    <cofactor evidence="1">
        <name>a divalent metal cation</name>
        <dbReference type="ChEBI" id="CHEBI:60240"/>
    </cofactor>
</comment>
<comment type="subunit">
    <text evidence="4 7 8">Component of a COP9 signalosome-like (CSN) complex, composed of at least RRI1/CSN5, CSN9, RRI2/CSN10, PCI8/CSN11, CSN12 and CSI1. Within this complex it probably interacts directly with CSN12. Also interacts with RPN5.</text>
</comment>
<comment type="interaction">
    <interactant intactId="EBI-37511">
        <id>Q12468</id>
    </interactant>
    <interactant intactId="EBI-28044">
        <id>Q04368</id>
        <label>CSI1</label>
    </interactant>
    <organismsDiffer>false</organismsDiffer>
    <experiments>3</experiments>
</comment>
<comment type="interaction">
    <interactant intactId="EBI-37511">
        <id>Q12468</id>
    </interactant>
    <interactant intactId="EBI-763">
        <id>P47130</id>
        <label>CSN12</label>
    </interactant>
    <organismsDiffer>false</organismsDiffer>
    <experiments>3</experiments>
</comment>
<comment type="interaction">
    <interactant intactId="EBI-37511">
        <id>Q12468</id>
    </interactant>
    <interactant intactId="EBI-33535">
        <id>Q03981</id>
        <label>CSN9</label>
    </interactant>
    <organismsDiffer>false</organismsDiffer>
    <experiments>4</experiments>
</comment>
<comment type="subcellular location">
    <subcellularLocation>
        <location>Cytoplasm</location>
    </subcellularLocation>
    <subcellularLocation>
        <location>Nucleus</location>
    </subcellularLocation>
    <text>Nuclear localization requires the formation of the CSN complex.</text>
</comment>
<comment type="domain">
    <text evidence="1">The JAMM motif is essential for the protease activity of the CSN complex resulting in deneddylation of cullins. It constitutes the catalytic center of the complex (By similarity).</text>
</comment>
<comment type="similarity">
    <text evidence="9">Belongs to the peptidase M67A family. CSN5 subfamily.</text>
</comment>
<comment type="sequence caution" evidence="9">
    <conflict type="erroneous initiation">
        <sequence resource="EMBL-CDS" id="CAA67474"/>
    </conflict>
</comment>
<comment type="sequence caution" evidence="9">
    <conflict type="erroneous initiation">
        <sequence resource="EMBL-CDS" id="CAA98794"/>
    </conflict>
</comment>
<organism>
    <name type="scientific">Saccharomyces cerevisiae (strain ATCC 204508 / S288c)</name>
    <name type="common">Baker's yeast</name>
    <dbReference type="NCBI Taxonomy" id="559292"/>
    <lineage>
        <taxon>Eukaryota</taxon>
        <taxon>Fungi</taxon>
        <taxon>Dikarya</taxon>
        <taxon>Ascomycota</taxon>
        <taxon>Saccharomycotina</taxon>
        <taxon>Saccharomycetes</taxon>
        <taxon>Saccharomycetales</taxon>
        <taxon>Saccharomycetaceae</taxon>
        <taxon>Saccharomyces</taxon>
    </lineage>
</organism>
<evidence type="ECO:0000250" key="1"/>
<evidence type="ECO:0000255" key="2">
    <source>
        <dbReference type="PROSITE-ProRule" id="PRU01182"/>
    </source>
</evidence>
<evidence type="ECO:0000256" key="3">
    <source>
        <dbReference type="SAM" id="MobiDB-lite"/>
    </source>
</evidence>
<evidence type="ECO:0000269" key="4">
    <source>
    </source>
</evidence>
<evidence type="ECO:0000269" key="5">
    <source>
    </source>
</evidence>
<evidence type="ECO:0000269" key="6">
    <source>
    </source>
</evidence>
<evidence type="ECO:0000269" key="7">
    <source>
    </source>
</evidence>
<evidence type="ECO:0000269" key="8">
    <source>
    </source>
</evidence>
<evidence type="ECO:0000305" key="9"/>
<gene>
    <name type="primary">RRI1</name>
    <name type="synonym">CSN5</name>
    <name type="synonym">JAB1</name>
    <name type="ordered locus">YDL216C</name>
    <name type="ORF">D0888</name>
</gene>
<sequence>MSLSNKTVKELRQLLKERYTVEDELTESIALSSMRFKPSQEPEFHALSQSSLLKTKLKQQSSTDIPSYTHVLISKLSCEKITHYAVRGGNIEIMGILMGFTLKDNIVVMDCFNLPVVGTETRVNAQLESYEYMVQYIDEMYNHNDGGDGRDYKGAKLNVVGWFHSHPGYDCWLSNIDIQTQDLNQRFQDPYVAIVVDPLKSLEDKILRMGAFRTIESKSDDNSATSYYELETIIFDSELNRALFETKLNLHCVIEDDESEQISLNRLIDSMKQYSYLMDSKNVRTRIKLATTSERVSNENKKNIDYQNRSTRSQFCLNTQRGDSTETSSFGSMFSGDNTSDVDMEDRNLTEFDSTDTSLCINGEPSIHVNRVERSSRSTDNFHNSKKRMNSNQERCHDEGNDMLQRNVLETDYARAKNRILASKIKQYERLRFYKDTFTL</sequence>
<name>CSN5_YEAST</name>
<accession>Q12468</accession>
<accession>D6VRD8</accession>
<reference key="1">
    <citation type="journal article" date="1997" name="Yeast">
        <title>The nucleotide sequence of a 39 kb segment of yeast chromosome IV: 12 new open reading frames, nine known genes and one gene for Gly-tRNA.</title>
        <authorList>
            <person name="Bahr A."/>
            <person name="Moeller-Rieker S."/>
            <person name="Hankeln T."/>
            <person name="Kraemer C."/>
            <person name="Protin U."/>
            <person name="Schmidt E.R."/>
        </authorList>
    </citation>
    <scope>NUCLEOTIDE SEQUENCE [GENOMIC DNA]</scope>
    <source>
        <strain>ATCC 96604 / S288c / FY1679</strain>
    </source>
</reference>
<reference key="2">
    <citation type="journal article" date="1997" name="Nature">
        <title>The nucleotide sequence of Saccharomyces cerevisiae chromosome IV.</title>
        <authorList>
            <person name="Jacq C."/>
            <person name="Alt-Moerbe J."/>
            <person name="Andre B."/>
            <person name="Arnold W."/>
            <person name="Bahr A."/>
            <person name="Ballesta J.P.G."/>
            <person name="Bargues M."/>
            <person name="Baron L."/>
            <person name="Becker A."/>
            <person name="Biteau N."/>
            <person name="Bloecker H."/>
            <person name="Blugeon C."/>
            <person name="Boskovic J."/>
            <person name="Brandt P."/>
            <person name="Brueckner M."/>
            <person name="Buitrago M.J."/>
            <person name="Coster F."/>
            <person name="Delaveau T."/>
            <person name="del Rey F."/>
            <person name="Dujon B."/>
            <person name="Eide L.G."/>
            <person name="Garcia-Cantalejo J.M."/>
            <person name="Goffeau A."/>
            <person name="Gomez-Peris A."/>
            <person name="Granotier C."/>
            <person name="Hanemann V."/>
            <person name="Hankeln T."/>
            <person name="Hoheisel J.D."/>
            <person name="Jaeger W."/>
            <person name="Jimenez A."/>
            <person name="Jonniaux J.-L."/>
            <person name="Kraemer C."/>
            <person name="Kuester H."/>
            <person name="Laamanen P."/>
            <person name="Legros Y."/>
            <person name="Louis E.J."/>
            <person name="Moeller-Rieker S."/>
            <person name="Monnet A."/>
            <person name="Moro M."/>
            <person name="Mueller-Auer S."/>
            <person name="Nussbaumer B."/>
            <person name="Paricio N."/>
            <person name="Paulin L."/>
            <person name="Perea J."/>
            <person name="Perez-Alonso M."/>
            <person name="Perez-Ortin J.E."/>
            <person name="Pohl T.M."/>
            <person name="Prydz H."/>
            <person name="Purnelle B."/>
            <person name="Rasmussen S.W."/>
            <person name="Remacha M.A."/>
            <person name="Revuelta J.L."/>
            <person name="Rieger M."/>
            <person name="Salom D."/>
            <person name="Saluz H.P."/>
            <person name="Saiz J.E."/>
            <person name="Saren A.-M."/>
            <person name="Schaefer M."/>
            <person name="Scharfe M."/>
            <person name="Schmidt E.R."/>
            <person name="Schneider C."/>
            <person name="Scholler P."/>
            <person name="Schwarz S."/>
            <person name="Soler-Mira A."/>
            <person name="Urrestarazu L.A."/>
            <person name="Verhasselt P."/>
            <person name="Vissers S."/>
            <person name="Voet M."/>
            <person name="Volckaert G."/>
            <person name="Wagner G."/>
            <person name="Wambutt R."/>
            <person name="Wedler E."/>
            <person name="Wedler H."/>
            <person name="Woelfl S."/>
            <person name="Harris D.E."/>
            <person name="Bowman S."/>
            <person name="Brown D."/>
            <person name="Churcher C.M."/>
            <person name="Connor R."/>
            <person name="Dedman K."/>
            <person name="Gentles S."/>
            <person name="Hamlin N."/>
            <person name="Hunt S."/>
            <person name="Jones L."/>
            <person name="McDonald S."/>
            <person name="Murphy L.D."/>
            <person name="Niblett D."/>
            <person name="Odell C."/>
            <person name="Oliver K."/>
            <person name="Rajandream M.A."/>
            <person name="Richards C."/>
            <person name="Shore L."/>
            <person name="Walsh S.V."/>
            <person name="Barrell B.G."/>
            <person name="Dietrich F.S."/>
            <person name="Mulligan J.T."/>
            <person name="Allen E."/>
            <person name="Araujo R."/>
            <person name="Aviles E."/>
            <person name="Berno A."/>
            <person name="Carpenter J."/>
            <person name="Chen E."/>
            <person name="Cherry J.M."/>
            <person name="Chung E."/>
            <person name="Duncan M."/>
            <person name="Hunicke-Smith S."/>
            <person name="Hyman R.W."/>
            <person name="Komp C."/>
            <person name="Lashkari D."/>
            <person name="Lew H."/>
            <person name="Lin D."/>
            <person name="Mosedale D."/>
            <person name="Nakahara K."/>
            <person name="Namath A."/>
            <person name="Oefner P."/>
            <person name="Oh C."/>
            <person name="Petel F.X."/>
            <person name="Roberts D."/>
            <person name="Schramm S."/>
            <person name="Schroeder M."/>
            <person name="Shogren T."/>
            <person name="Shroff N."/>
            <person name="Winant A."/>
            <person name="Yelton M.A."/>
            <person name="Botstein D."/>
            <person name="Davis R.W."/>
            <person name="Johnston M."/>
            <person name="Andrews S."/>
            <person name="Brinkman R."/>
            <person name="Cooper J."/>
            <person name="Ding H."/>
            <person name="Du Z."/>
            <person name="Favello A."/>
            <person name="Fulton L."/>
            <person name="Gattung S."/>
            <person name="Greco T."/>
            <person name="Hallsworth K."/>
            <person name="Hawkins J."/>
            <person name="Hillier L.W."/>
            <person name="Jier M."/>
            <person name="Johnson D."/>
            <person name="Johnston L."/>
            <person name="Kirsten J."/>
            <person name="Kucaba T."/>
            <person name="Langston Y."/>
            <person name="Latreille P."/>
            <person name="Le T."/>
            <person name="Mardis E."/>
            <person name="Menezes S."/>
            <person name="Miller N."/>
            <person name="Nhan M."/>
            <person name="Pauley A."/>
            <person name="Peluso D."/>
            <person name="Rifkin L."/>
            <person name="Riles L."/>
            <person name="Taich A."/>
            <person name="Trevaskis E."/>
            <person name="Vignati D."/>
            <person name="Wilcox L."/>
            <person name="Wohldman P."/>
            <person name="Vaudin M."/>
            <person name="Wilson R."/>
            <person name="Waterston R."/>
            <person name="Albermann K."/>
            <person name="Hani J."/>
            <person name="Heumann K."/>
            <person name="Kleine K."/>
            <person name="Mewes H.-W."/>
            <person name="Zollner A."/>
            <person name="Zaccaria P."/>
        </authorList>
    </citation>
    <scope>NUCLEOTIDE SEQUENCE [LARGE SCALE GENOMIC DNA]</scope>
    <source>
        <strain>ATCC 204508 / S288c</strain>
    </source>
</reference>
<reference key="3">
    <citation type="journal article" date="2014" name="G3 (Bethesda)">
        <title>The reference genome sequence of Saccharomyces cerevisiae: Then and now.</title>
        <authorList>
            <person name="Engel S.R."/>
            <person name="Dietrich F.S."/>
            <person name="Fisk D.G."/>
            <person name="Binkley G."/>
            <person name="Balakrishnan R."/>
            <person name="Costanzo M.C."/>
            <person name="Dwight S.S."/>
            <person name="Hitz B.C."/>
            <person name="Karra K."/>
            <person name="Nash R.S."/>
            <person name="Weng S."/>
            <person name="Wong E.D."/>
            <person name="Lloyd P."/>
            <person name="Skrzypek M.S."/>
            <person name="Miyasato S.R."/>
            <person name="Simison M."/>
            <person name="Cherry J.M."/>
        </authorList>
    </citation>
    <scope>GENOME REANNOTATION</scope>
    <source>
        <strain>ATCC 204508 / S288c</strain>
    </source>
</reference>
<reference key="4">
    <citation type="journal article" date="2002" name="BMC Genet.">
        <title>Conservation of the COP9/signalosome in budding yeast.</title>
        <authorList>
            <person name="Wee S."/>
            <person name="Hetfeld B."/>
            <person name="Dubiel W."/>
            <person name="Wolf D.A."/>
        </authorList>
    </citation>
    <scope>FUNCTION OF THE COP9 SIGNALOSOME COMPLEX</scope>
</reference>
<reference key="5">
    <citation type="journal article" date="2002" name="EMBO Rep.">
        <title>COP9 signalosome components play a role in the mating pheromone response of S. cerevisiae.</title>
        <authorList>
            <person name="Maytal-Kivity V."/>
            <person name="Piran R."/>
            <person name="Pick E."/>
            <person name="Hofmann K."/>
            <person name="Glickman M.H."/>
        </authorList>
    </citation>
    <scope>SUBCELLULAR LOCATION</scope>
    <scope>INTERACTION WITH CSN12</scope>
    <scope>IDENTIFICATION IN THE COP9 SIGNALOSOME COMPLEX</scope>
    <scope>FUNCTION OF THE COP9 SIGNALOSOME-LIKE COMPLEX</scope>
</reference>
<reference key="6">
    <citation type="journal article" date="2002" name="Nature">
        <title>Functional organization of the yeast proteome by systematic analysis of protein complexes.</title>
        <authorList>
            <person name="Gavin A.-C."/>
            <person name="Boesche M."/>
            <person name="Krause R."/>
            <person name="Grandi P."/>
            <person name="Marzioch M."/>
            <person name="Bauer A."/>
            <person name="Schultz J."/>
            <person name="Rick J.M."/>
            <person name="Michon A.-M."/>
            <person name="Cruciat C.-M."/>
            <person name="Remor M."/>
            <person name="Hoefert C."/>
            <person name="Schelder M."/>
            <person name="Brajenovic M."/>
            <person name="Ruffner H."/>
            <person name="Merino A."/>
            <person name="Klein K."/>
            <person name="Hudak M."/>
            <person name="Dickson D."/>
            <person name="Rudi T."/>
            <person name="Gnau V."/>
            <person name="Bauch A."/>
            <person name="Bastuck S."/>
            <person name="Huhse B."/>
            <person name="Leutwein C."/>
            <person name="Heurtier M.-A."/>
            <person name="Copley R.R."/>
            <person name="Edelmann A."/>
            <person name="Querfurth E."/>
            <person name="Rybin V."/>
            <person name="Drewes G."/>
            <person name="Raida M."/>
            <person name="Bouwmeester T."/>
            <person name="Bork P."/>
            <person name="Seraphin B."/>
            <person name="Kuster B."/>
            <person name="Neubauer G."/>
            <person name="Superti-Furga G."/>
        </authorList>
    </citation>
    <scope>INTERACTION WITH CSN9; RRI2; PCI8; CSN12; CSI1 AND RPN5</scope>
    <scope>IDENTIFICATION BY MASS SPECTROMETRY</scope>
</reference>
<reference key="7">
    <citation type="journal article" date="2002" name="Science">
        <title>Role of predicted metalloprotease motif of Jab1/Csn5 in cleavage of Nedd8 from Cul1.</title>
        <authorList>
            <person name="Cope G.A."/>
            <person name="Suh G.S.B."/>
            <person name="Aravind L."/>
            <person name="Schwarz S.E."/>
            <person name="Zipursky S.L."/>
            <person name="Koonin E.V."/>
            <person name="Deshaies R.J."/>
        </authorList>
    </citation>
    <scope>FUNCTION</scope>
    <scope>DOMAIN</scope>
    <scope>MUTAGENESIS OF HIS-164; HIS-166 AND ASP-177</scope>
</reference>
<reference key="8">
    <citation type="journal article" date="2003" name="Int. J. Biochem. Cell Biol.">
        <title>The COP9 signalosome-like complex in S. cerevisiae and links to other PCI complexes.</title>
        <authorList>
            <person name="Maytal-Kivity V."/>
            <person name="Pick E."/>
            <person name="Piran R."/>
            <person name="Hofmann K."/>
            <person name="Glickman M.H."/>
        </authorList>
    </citation>
    <scope>SUBCELLULAR LOCATION</scope>
    <scope>INTERACTION WITH CSN12</scope>
    <scope>IDENTIFICATION IN THE COP9 SIGNALOSOME COMPLEX</scope>
</reference>
<reference key="9">
    <citation type="journal article" date="2003" name="Nature">
        <title>Sequencing and comparison of yeast species to identify genes and regulatory elements.</title>
        <authorList>
            <person name="Kellis M."/>
            <person name="Patterson N."/>
            <person name="Endrizzi M."/>
            <person name="Birren B.W."/>
            <person name="Lander E.S."/>
        </authorList>
    </citation>
    <scope>IDENTIFICATION OF PROBABLE INITIATION SITE</scope>
</reference>
<reference key="10">
    <citation type="journal article" date="2003" name="Nature">
        <title>Global analysis of protein localization in budding yeast.</title>
        <authorList>
            <person name="Huh W.-K."/>
            <person name="Falvo J.V."/>
            <person name="Gerke L.C."/>
            <person name="Carroll A.S."/>
            <person name="Howson R.W."/>
            <person name="Weissman J.S."/>
            <person name="O'Shea E.K."/>
        </authorList>
    </citation>
    <scope>SUBCELLULAR LOCATION [LARGE SCALE ANALYSIS]</scope>
</reference>
<reference key="11">
    <citation type="journal article" date="2003" name="Science">
        <title>Finding functional features in Saccharomyces genomes by phylogenetic footprinting.</title>
        <authorList>
            <person name="Cliften P.F."/>
            <person name="Sudarsanam P."/>
            <person name="Desikan A."/>
            <person name="Fulton L."/>
            <person name="Fulton B."/>
            <person name="Majors J."/>
            <person name="Waterston R."/>
            <person name="Cohen B.A."/>
            <person name="Johnston M."/>
        </authorList>
    </citation>
    <scope>IDENTIFICATION OF PROBABLE INITIATION SITE</scope>
</reference>
<protein>
    <recommendedName>
        <fullName>COP9 signalosome complex subunit 5</fullName>
        <ecNumber>3.4.-.-</ecNumber>
    </recommendedName>
</protein>
<dbReference type="EC" id="3.4.-.-"/>
<dbReference type="EMBL" id="X99000">
    <property type="protein sequence ID" value="CAA67474.1"/>
    <property type="status" value="ALT_INIT"/>
    <property type="molecule type" value="Genomic_DNA"/>
</dbReference>
<dbReference type="EMBL" id="Z74264">
    <property type="protein sequence ID" value="CAA98794.1"/>
    <property type="status" value="ALT_INIT"/>
    <property type="molecule type" value="Genomic_DNA"/>
</dbReference>
<dbReference type="EMBL" id="BK006938">
    <property type="protein sequence ID" value="DAA11648.1"/>
    <property type="molecule type" value="Genomic_DNA"/>
</dbReference>
<dbReference type="PIR" id="S67775">
    <property type="entry name" value="S67775"/>
</dbReference>
<dbReference type="RefSeq" id="NP_010065.2">
    <property type="nucleotide sequence ID" value="NM_001180276.1"/>
</dbReference>
<dbReference type="SMR" id="Q12468"/>
<dbReference type="BioGRID" id="31829">
    <property type="interactions" value="176"/>
</dbReference>
<dbReference type="ComplexPortal" id="CPX-1894">
    <property type="entry name" value="COP9 signalosome complex"/>
</dbReference>
<dbReference type="DIP" id="DIP-1809N"/>
<dbReference type="FunCoup" id="Q12468">
    <property type="interactions" value="77"/>
</dbReference>
<dbReference type="IntAct" id="Q12468">
    <property type="interactions" value="8"/>
</dbReference>
<dbReference type="MINT" id="Q12468"/>
<dbReference type="STRING" id="4932.YDL216C"/>
<dbReference type="iPTMnet" id="Q12468"/>
<dbReference type="PaxDb" id="4932-YDL216C"/>
<dbReference type="PeptideAtlas" id="Q12468"/>
<dbReference type="EnsemblFungi" id="YDL216C_mRNA">
    <property type="protein sequence ID" value="YDL216C"/>
    <property type="gene ID" value="YDL216C"/>
</dbReference>
<dbReference type="GeneID" id="851310"/>
<dbReference type="KEGG" id="sce:YDL216C"/>
<dbReference type="AGR" id="SGD:S000002375"/>
<dbReference type="SGD" id="S000002375">
    <property type="gene designation" value="RRI1"/>
</dbReference>
<dbReference type="VEuPathDB" id="FungiDB:YDL216C"/>
<dbReference type="eggNOG" id="KOG1554">
    <property type="taxonomic scope" value="Eukaryota"/>
</dbReference>
<dbReference type="GeneTree" id="ENSGT00550000074850"/>
<dbReference type="HOGENOM" id="CLU_031199_1_0_1"/>
<dbReference type="InParanoid" id="Q12468"/>
<dbReference type="OMA" id="QMESYEY"/>
<dbReference type="OrthoDB" id="605656at2759"/>
<dbReference type="BioCyc" id="YEAST:G3O-29597-MONOMER"/>
<dbReference type="BioGRID-ORCS" id="851310">
    <property type="hits" value="0 hits in 10 CRISPR screens"/>
</dbReference>
<dbReference type="PRO" id="PR:Q12468"/>
<dbReference type="Proteomes" id="UP000002311">
    <property type="component" value="Chromosome IV"/>
</dbReference>
<dbReference type="RNAct" id="Q12468">
    <property type="molecule type" value="protein"/>
</dbReference>
<dbReference type="GO" id="GO:0008180">
    <property type="term" value="C:COP9 signalosome"/>
    <property type="evidence" value="ECO:0000314"/>
    <property type="project" value="SGD"/>
</dbReference>
<dbReference type="GO" id="GO:0005737">
    <property type="term" value="C:cytoplasm"/>
    <property type="evidence" value="ECO:0000318"/>
    <property type="project" value="GO_Central"/>
</dbReference>
<dbReference type="GO" id="GO:0005634">
    <property type="term" value="C:nucleus"/>
    <property type="evidence" value="ECO:0000303"/>
    <property type="project" value="ComplexPortal"/>
</dbReference>
<dbReference type="GO" id="GO:0019784">
    <property type="term" value="F:deNEDDylase activity"/>
    <property type="evidence" value="ECO:0000318"/>
    <property type="project" value="GO_Central"/>
</dbReference>
<dbReference type="GO" id="GO:0046872">
    <property type="term" value="F:metal ion binding"/>
    <property type="evidence" value="ECO:0007669"/>
    <property type="project" value="UniProtKB-KW"/>
</dbReference>
<dbReference type="GO" id="GO:0004222">
    <property type="term" value="F:metalloendopeptidase activity"/>
    <property type="evidence" value="ECO:0000315"/>
    <property type="project" value="SGD"/>
</dbReference>
<dbReference type="GO" id="GO:0008237">
    <property type="term" value="F:metallopeptidase activity"/>
    <property type="evidence" value="ECO:0000318"/>
    <property type="project" value="GO_Central"/>
</dbReference>
<dbReference type="GO" id="GO:0000754">
    <property type="term" value="P:adaptation of signaling pathway by response to pheromone involved in conjugation with cellular fusion"/>
    <property type="evidence" value="ECO:0000303"/>
    <property type="project" value="ComplexPortal"/>
</dbReference>
<dbReference type="GO" id="GO:0071444">
    <property type="term" value="P:cellular response to pheromone"/>
    <property type="evidence" value="ECO:0000315"/>
    <property type="project" value="SGD"/>
</dbReference>
<dbReference type="GO" id="GO:0000747">
    <property type="term" value="P:conjugation with cellular fusion"/>
    <property type="evidence" value="ECO:0000315"/>
    <property type="project" value="SGD"/>
</dbReference>
<dbReference type="GO" id="GO:0070452">
    <property type="term" value="P:positive regulation of ergosterol biosynthetic process"/>
    <property type="evidence" value="ECO:0000315"/>
    <property type="project" value="SGD"/>
</dbReference>
<dbReference type="GO" id="GO:0000338">
    <property type="term" value="P:protein deneddylation"/>
    <property type="evidence" value="ECO:0000315"/>
    <property type="project" value="SGD"/>
</dbReference>
<dbReference type="GO" id="GO:0006508">
    <property type="term" value="P:proteolysis"/>
    <property type="evidence" value="ECO:0007669"/>
    <property type="project" value="UniProtKB-KW"/>
</dbReference>
<dbReference type="GO" id="GO:0051726">
    <property type="term" value="P:regulation of cell cycle"/>
    <property type="evidence" value="ECO:0000318"/>
    <property type="project" value="GO_Central"/>
</dbReference>
<dbReference type="GO" id="GO:2000434">
    <property type="term" value="P:regulation of protein neddylation"/>
    <property type="evidence" value="ECO:0000303"/>
    <property type="project" value="ComplexPortal"/>
</dbReference>
<dbReference type="CDD" id="cd08069">
    <property type="entry name" value="MPN_RPN11_CSN5"/>
    <property type="match status" value="1"/>
</dbReference>
<dbReference type="FunFam" id="3.40.140.10:FF:000076">
    <property type="entry name" value="COP9 signalosome complex subunit 5"/>
    <property type="match status" value="1"/>
</dbReference>
<dbReference type="Gene3D" id="3.40.140.10">
    <property type="entry name" value="Cytidine Deaminase, domain 2"/>
    <property type="match status" value="1"/>
</dbReference>
<dbReference type="InterPro" id="IPR000555">
    <property type="entry name" value="JAMM/MPN+_dom"/>
</dbReference>
<dbReference type="InterPro" id="IPR050242">
    <property type="entry name" value="JAMM_MPN+_peptidase_M67A"/>
</dbReference>
<dbReference type="InterPro" id="IPR037518">
    <property type="entry name" value="MPN"/>
</dbReference>
<dbReference type="PANTHER" id="PTHR10410">
    <property type="entry name" value="EUKARYOTIC TRANSLATION INITIATION FACTOR 3 -RELATED"/>
    <property type="match status" value="1"/>
</dbReference>
<dbReference type="Pfam" id="PF01398">
    <property type="entry name" value="JAB"/>
    <property type="match status" value="1"/>
</dbReference>
<dbReference type="SMART" id="SM00232">
    <property type="entry name" value="JAB_MPN"/>
    <property type="match status" value="1"/>
</dbReference>
<dbReference type="SUPFAM" id="SSF102712">
    <property type="entry name" value="JAB1/MPN domain"/>
    <property type="match status" value="1"/>
</dbReference>
<dbReference type="PROSITE" id="PS50249">
    <property type="entry name" value="MPN"/>
    <property type="match status" value="1"/>
</dbReference>
<keyword id="KW-0963">Cytoplasm</keyword>
<keyword id="KW-0378">Hydrolase</keyword>
<keyword id="KW-0479">Metal-binding</keyword>
<keyword id="KW-0482">Metalloprotease</keyword>
<keyword id="KW-0539">Nucleus</keyword>
<keyword id="KW-0645">Protease</keyword>
<keyword id="KW-1185">Reference proteome</keyword>
<keyword id="KW-0736">Signalosome</keyword>
<keyword id="KW-0862">Zinc</keyword>